<protein>
    <recommendedName>
        <fullName evidence="1">DNA-directed RNA polymerase subunit beta'</fullName>
        <shortName evidence="1">RNAP subunit beta'</shortName>
        <ecNumber evidence="1">2.7.7.6</ecNumber>
    </recommendedName>
    <alternativeName>
        <fullName evidence="1">RNA polymerase subunit beta'</fullName>
    </alternativeName>
    <alternativeName>
        <fullName evidence="1">Transcriptase subunit beta'</fullName>
    </alternativeName>
</protein>
<comment type="function">
    <text evidence="1">DNA-dependent RNA polymerase catalyzes the transcription of DNA into RNA using the four ribonucleoside triphosphates as substrates.</text>
</comment>
<comment type="catalytic activity">
    <reaction evidence="1">
        <text>RNA(n) + a ribonucleoside 5'-triphosphate = RNA(n+1) + diphosphate</text>
        <dbReference type="Rhea" id="RHEA:21248"/>
        <dbReference type="Rhea" id="RHEA-COMP:14527"/>
        <dbReference type="Rhea" id="RHEA-COMP:17342"/>
        <dbReference type="ChEBI" id="CHEBI:33019"/>
        <dbReference type="ChEBI" id="CHEBI:61557"/>
        <dbReference type="ChEBI" id="CHEBI:140395"/>
        <dbReference type="EC" id="2.7.7.6"/>
    </reaction>
</comment>
<comment type="cofactor">
    <cofactor evidence="1">
        <name>Mg(2+)</name>
        <dbReference type="ChEBI" id="CHEBI:18420"/>
    </cofactor>
    <text evidence="1">Binds 1 Mg(2+) ion per subunit.</text>
</comment>
<comment type="cofactor">
    <cofactor evidence="1">
        <name>Zn(2+)</name>
        <dbReference type="ChEBI" id="CHEBI:29105"/>
    </cofactor>
    <text evidence="1">Binds 2 Zn(2+) ions per subunit.</text>
</comment>
<comment type="subunit">
    <text evidence="1">The RNAP catalytic core consists of 2 alpha, 1 beta, 1 beta' and 1 omega subunit. When a sigma factor is associated with the core the holoenzyme is formed, which can initiate transcription.</text>
</comment>
<comment type="similarity">
    <text evidence="1">Belongs to the RNA polymerase beta' chain family.</text>
</comment>
<reference key="1">
    <citation type="journal article" date="2010" name="PLoS ONE">
        <title>The complete multipartite genome sequence of Cupriavidus necator JMP134, a versatile pollutant degrader.</title>
        <authorList>
            <person name="Lykidis A."/>
            <person name="Perez-Pantoja D."/>
            <person name="Ledger T."/>
            <person name="Mavromatis K."/>
            <person name="Anderson I.J."/>
            <person name="Ivanova N.N."/>
            <person name="Hooper S.D."/>
            <person name="Lapidus A."/>
            <person name="Lucas S."/>
            <person name="Gonzalez B."/>
            <person name="Kyrpides N.C."/>
        </authorList>
    </citation>
    <scope>NUCLEOTIDE SEQUENCE [LARGE SCALE GENOMIC DNA]</scope>
    <source>
        <strain>JMP134 / LMG 1197</strain>
    </source>
</reference>
<organism>
    <name type="scientific">Cupriavidus pinatubonensis (strain JMP 134 / LMG 1197)</name>
    <name type="common">Cupriavidus necator (strain JMP 134)</name>
    <dbReference type="NCBI Taxonomy" id="264198"/>
    <lineage>
        <taxon>Bacteria</taxon>
        <taxon>Pseudomonadati</taxon>
        <taxon>Pseudomonadota</taxon>
        <taxon>Betaproteobacteria</taxon>
        <taxon>Burkholderiales</taxon>
        <taxon>Burkholderiaceae</taxon>
        <taxon>Cupriavidus</taxon>
    </lineage>
</organism>
<feature type="chain" id="PRO_0000225570" description="DNA-directed RNA polymerase subunit beta'">
    <location>
        <begin position="1"/>
        <end position="1415"/>
    </location>
</feature>
<feature type="region of interest" description="Disordered" evidence="2">
    <location>
        <begin position="1382"/>
        <end position="1415"/>
    </location>
</feature>
<feature type="binding site" evidence="1">
    <location>
        <position position="70"/>
    </location>
    <ligand>
        <name>Zn(2+)</name>
        <dbReference type="ChEBI" id="CHEBI:29105"/>
        <label>1</label>
    </ligand>
</feature>
<feature type="binding site" evidence="1">
    <location>
        <position position="72"/>
    </location>
    <ligand>
        <name>Zn(2+)</name>
        <dbReference type="ChEBI" id="CHEBI:29105"/>
        <label>1</label>
    </ligand>
</feature>
<feature type="binding site" evidence="1">
    <location>
        <position position="85"/>
    </location>
    <ligand>
        <name>Zn(2+)</name>
        <dbReference type="ChEBI" id="CHEBI:29105"/>
        <label>1</label>
    </ligand>
</feature>
<feature type="binding site" evidence="1">
    <location>
        <position position="88"/>
    </location>
    <ligand>
        <name>Zn(2+)</name>
        <dbReference type="ChEBI" id="CHEBI:29105"/>
        <label>1</label>
    </ligand>
</feature>
<feature type="binding site" evidence="1">
    <location>
        <position position="461"/>
    </location>
    <ligand>
        <name>Mg(2+)</name>
        <dbReference type="ChEBI" id="CHEBI:18420"/>
    </ligand>
</feature>
<feature type="binding site" evidence="1">
    <location>
        <position position="463"/>
    </location>
    <ligand>
        <name>Mg(2+)</name>
        <dbReference type="ChEBI" id="CHEBI:18420"/>
    </ligand>
</feature>
<feature type="binding site" evidence="1">
    <location>
        <position position="465"/>
    </location>
    <ligand>
        <name>Mg(2+)</name>
        <dbReference type="ChEBI" id="CHEBI:18420"/>
    </ligand>
</feature>
<feature type="binding site" evidence="1">
    <location>
        <position position="820"/>
    </location>
    <ligand>
        <name>Zn(2+)</name>
        <dbReference type="ChEBI" id="CHEBI:29105"/>
        <label>2</label>
    </ligand>
</feature>
<feature type="binding site" evidence="1">
    <location>
        <position position="894"/>
    </location>
    <ligand>
        <name>Zn(2+)</name>
        <dbReference type="ChEBI" id="CHEBI:29105"/>
        <label>2</label>
    </ligand>
</feature>
<feature type="binding site" evidence="1">
    <location>
        <position position="901"/>
    </location>
    <ligand>
        <name>Zn(2+)</name>
        <dbReference type="ChEBI" id="CHEBI:29105"/>
        <label>2</label>
    </ligand>
</feature>
<feature type="binding site" evidence="1">
    <location>
        <position position="904"/>
    </location>
    <ligand>
        <name>Zn(2+)</name>
        <dbReference type="ChEBI" id="CHEBI:29105"/>
        <label>2</label>
    </ligand>
</feature>
<name>RPOC_CUPPJ</name>
<keyword id="KW-0240">DNA-directed RNA polymerase</keyword>
<keyword id="KW-0460">Magnesium</keyword>
<keyword id="KW-0479">Metal-binding</keyword>
<keyword id="KW-0548">Nucleotidyltransferase</keyword>
<keyword id="KW-0804">Transcription</keyword>
<keyword id="KW-0808">Transferase</keyword>
<keyword id="KW-0862">Zinc</keyword>
<gene>
    <name evidence="1" type="primary">rpoC</name>
    <name type="ordered locus">Reut_A3188</name>
</gene>
<accession>Q46WD5</accession>
<evidence type="ECO:0000255" key="1">
    <source>
        <dbReference type="HAMAP-Rule" id="MF_01322"/>
    </source>
</evidence>
<evidence type="ECO:0000256" key="2">
    <source>
        <dbReference type="SAM" id="MobiDB-lite"/>
    </source>
</evidence>
<proteinExistence type="inferred from homology"/>
<dbReference type="EC" id="2.7.7.6" evidence="1"/>
<dbReference type="EMBL" id="CP000090">
    <property type="protein sequence ID" value="AAZ62548.1"/>
    <property type="molecule type" value="Genomic_DNA"/>
</dbReference>
<dbReference type="SMR" id="Q46WD5"/>
<dbReference type="STRING" id="264198.Reut_A3188"/>
<dbReference type="KEGG" id="reu:Reut_A3188"/>
<dbReference type="eggNOG" id="COG0086">
    <property type="taxonomic scope" value="Bacteria"/>
</dbReference>
<dbReference type="HOGENOM" id="CLU_000524_3_1_4"/>
<dbReference type="OrthoDB" id="9815296at2"/>
<dbReference type="GO" id="GO:0000428">
    <property type="term" value="C:DNA-directed RNA polymerase complex"/>
    <property type="evidence" value="ECO:0007669"/>
    <property type="project" value="UniProtKB-KW"/>
</dbReference>
<dbReference type="GO" id="GO:0003677">
    <property type="term" value="F:DNA binding"/>
    <property type="evidence" value="ECO:0007669"/>
    <property type="project" value="UniProtKB-UniRule"/>
</dbReference>
<dbReference type="GO" id="GO:0003899">
    <property type="term" value="F:DNA-directed RNA polymerase activity"/>
    <property type="evidence" value="ECO:0007669"/>
    <property type="project" value="UniProtKB-UniRule"/>
</dbReference>
<dbReference type="GO" id="GO:0000287">
    <property type="term" value="F:magnesium ion binding"/>
    <property type="evidence" value="ECO:0007669"/>
    <property type="project" value="UniProtKB-UniRule"/>
</dbReference>
<dbReference type="GO" id="GO:0008270">
    <property type="term" value="F:zinc ion binding"/>
    <property type="evidence" value="ECO:0007669"/>
    <property type="project" value="UniProtKB-UniRule"/>
</dbReference>
<dbReference type="GO" id="GO:0006351">
    <property type="term" value="P:DNA-templated transcription"/>
    <property type="evidence" value="ECO:0007669"/>
    <property type="project" value="UniProtKB-UniRule"/>
</dbReference>
<dbReference type="CDD" id="cd02655">
    <property type="entry name" value="RNAP_beta'_C"/>
    <property type="match status" value="1"/>
</dbReference>
<dbReference type="CDD" id="cd01609">
    <property type="entry name" value="RNAP_beta'_N"/>
    <property type="match status" value="1"/>
</dbReference>
<dbReference type="FunFam" id="1.10.132.30:FF:000003">
    <property type="entry name" value="DNA-directed RNA polymerase subunit beta"/>
    <property type="match status" value="1"/>
</dbReference>
<dbReference type="FunFam" id="1.10.150.390:FF:000002">
    <property type="entry name" value="DNA-directed RNA polymerase subunit beta"/>
    <property type="match status" value="1"/>
</dbReference>
<dbReference type="FunFam" id="4.10.860.120:FF:000001">
    <property type="entry name" value="DNA-directed RNA polymerase subunit beta"/>
    <property type="match status" value="1"/>
</dbReference>
<dbReference type="Gene3D" id="1.10.132.30">
    <property type="match status" value="1"/>
</dbReference>
<dbReference type="Gene3D" id="1.10.150.390">
    <property type="match status" value="1"/>
</dbReference>
<dbReference type="Gene3D" id="1.10.1790.20">
    <property type="match status" value="1"/>
</dbReference>
<dbReference type="Gene3D" id="1.10.40.90">
    <property type="match status" value="1"/>
</dbReference>
<dbReference type="Gene3D" id="2.40.40.20">
    <property type="match status" value="1"/>
</dbReference>
<dbReference type="Gene3D" id="2.40.50.100">
    <property type="match status" value="3"/>
</dbReference>
<dbReference type="Gene3D" id="4.10.860.120">
    <property type="entry name" value="RNA polymerase II, clamp domain"/>
    <property type="match status" value="1"/>
</dbReference>
<dbReference type="Gene3D" id="1.10.274.100">
    <property type="entry name" value="RNA polymerase Rpb1, domain 3"/>
    <property type="match status" value="1"/>
</dbReference>
<dbReference type="HAMAP" id="MF_01322">
    <property type="entry name" value="RNApol_bact_RpoC"/>
    <property type="match status" value="1"/>
</dbReference>
<dbReference type="InterPro" id="IPR045867">
    <property type="entry name" value="DNA-dir_RpoC_beta_prime"/>
</dbReference>
<dbReference type="InterPro" id="IPR012754">
    <property type="entry name" value="DNA-dir_RpoC_beta_prime_bact"/>
</dbReference>
<dbReference type="InterPro" id="IPR000722">
    <property type="entry name" value="RNA_pol_asu"/>
</dbReference>
<dbReference type="InterPro" id="IPR006592">
    <property type="entry name" value="RNA_pol_N"/>
</dbReference>
<dbReference type="InterPro" id="IPR007080">
    <property type="entry name" value="RNA_pol_Rpb1_1"/>
</dbReference>
<dbReference type="InterPro" id="IPR007066">
    <property type="entry name" value="RNA_pol_Rpb1_3"/>
</dbReference>
<dbReference type="InterPro" id="IPR042102">
    <property type="entry name" value="RNA_pol_Rpb1_3_sf"/>
</dbReference>
<dbReference type="InterPro" id="IPR007083">
    <property type="entry name" value="RNA_pol_Rpb1_4"/>
</dbReference>
<dbReference type="InterPro" id="IPR007081">
    <property type="entry name" value="RNA_pol_Rpb1_5"/>
</dbReference>
<dbReference type="InterPro" id="IPR044893">
    <property type="entry name" value="RNA_pol_Rpb1_clamp_domain"/>
</dbReference>
<dbReference type="InterPro" id="IPR038120">
    <property type="entry name" value="Rpb1_funnel_sf"/>
</dbReference>
<dbReference type="NCBIfam" id="TIGR02386">
    <property type="entry name" value="rpoC_TIGR"/>
    <property type="match status" value="1"/>
</dbReference>
<dbReference type="PANTHER" id="PTHR19376">
    <property type="entry name" value="DNA-DIRECTED RNA POLYMERASE"/>
    <property type="match status" value="1"/>
</dbReference>
<dbReference type="PANTHER" id="PTHR19376:SF54">
    <property type="entry name" value="DNA-DIRECTED RNA POLYMERASE SUBUNIT BETA"/>
    <property type="match status" value="1"/>
</dbReference>
<dbReference type="Pfam" id="PF04997">
    <property type="entry name" value="RNA_pol_Rpb1_1"/>
    <property type="match status" value="1"/>
</dbReference>
<dbReference type="Pfam" id="PF00623">
    <property type="entry name" value="RNA_pol_Rpb1_2"/>
    <property type="match status" value="1"/>
</dbReference>
<dbReference type="Pfam" id="PF04983">
    <property type="entry name" value="RNA_pol_Rpb1_3"/>
    <property type="match status" value="1"/>
</dbReference>
<dbReference type="Pfam" id="PF05000">
    <property type="entry name" value="RNA_pol_Rpb1_4"/>
    <property type="match status" value="1"/>
</dbReference>
<dbReference type="Pfam" id="PF04998">
    <property type="entry name" value="RNA_pol_Rpb1_5"/>
    <property type="match status" value="1"/>
</dbReference>
<dbReference type="SMART" id="SM00663">
    <property type="entry name" value="RPOLA_N"/>
    <property type="match status" value="1"/>
</dbReference>
<dbReference type="SUPFAM" id="SSF64484">
    <property type="entry name" value="beta and beta-prime subunits of DNA dependent RNA-polymerase"/>
    <property type="match status" value="1"/>
</dbReference>
<sequence length="1415" mass="155937">MKALLDLFKQVQQEEQFDAIKIGLASPEKIRSWSYGEVKKPETINYRTFKPERDGLFCAKIFGPIKDYECLCGKYKRLKHRGVICEKCGVEVTLAKVRRERMGHIELAAPTAHIWFLKSLPSRLGMVLDMTLRDIERVLYFEAFVVLEPGMTPLKKSQIMSEDDYLAKCDEYGEGEFVAMMGAEGIRELLRGIDIEKQIEQIRAELQATGSEAKIKKFAKRLKVLEAFQRSGIKPEWMILEVLPVLPPELRPLVPLDGGRFATSDLNDLYRRVINRNNRLKRLLELKAPEIIVRNEKRMLQEAVDSLLDNGRRGKAMTGANKRPLKSLAEMIKGKGGRFRQNLLGKRVDYSGRSVIVVGPTLKLHQCGLPKLMALELFKPFIFHKLETMGIATTIKAAKKEVESQTPVVWDILEEVIREHPVMLNRAPTLHRLGIQAFEPVLIEGKAIQLHPLVCAAFNADFDGDQMAVHVPLSLEAQMEARTLMLASNNVLFPANGDPSIVPSQDVVLGLYYTTRDKINGKGEGMTFADISEVIRAYENKEVELASRVNVRITEYELVDKDAEGDARFAPKITLQATTVGRAILSEILPKGLPFSVLNKPLKKKEISRLINTAFRKCGLRETVIFADKLLQSGFRLATRAGISIAIDDMLVPPAKEKIISEASAKVKEYDKQYMSGLVTDQERYNNVVDIWGAAGDQVGKAMMEQLQHEDVVDRNGNTVKQESFNSIYMMADSGARGSAAQIRQLAGMRGLMAKPDGSIIETPITANFREGLNVLQYFISTHGARKGLADTALKTANSGYLTRRLVDVTQDLVVVEDDCGTSNGVAMKALVEGGEVIEALRDRILGRVTVADVVNPETQETAIETGTLLDEDLVDLIDALGVDEVKVRTPLSCDTRYGLCGKCYGRDLGRGVLVNSGEAVGVIAAQSIGEPGTQLTMRTFHIGGAASRAAVASSVEAKATGTVRFTVTMRYVTNAKGELIVISRSGEALITDDHGRERERHKIPYGATLLVQDGQAIKAGTQLATWDALTRPIVSEYTGTTKFENVEEGVTVAKQMDEVTGLSTLVVIDAKRRTAATKGIRPQVKLLDANGQEVKIPGTDHSVTIGFQVGALITVKDGQQVHVGEVLARIPTESQKTRDITGGLPRVAELFEARSPKDAAVLAEVTGTTSFGKDTKGKQRLVITDLDGNAHEFLIAKEKQVLVHDGQVVNKGEMIVEGPADPHDILRLKGIEELAHYIVDEVQDVYRLQGVKINDKHIEVIVRQMLRRVQVADVGDTKFIPGEQVERSELLDENDRVIAEGKRPATYENLLLGITKASLSTDSFISAASFQETTRVLTEAAIMGKTDDLRGLKENVIVGRLIPAGTGLAYHRARKAREASERERAQAIADEEQSLFIEPPPVVQATTEGEGDNA</sequence>